<dbReference type="EMBL" id="M33606">
    <property type="protein sequence ID" value="AAA47314.1"/>
    <property type="molecule type" value="Genomic_RNA"/>
</dbReference>
<dbReference type="SMR" id="P23046"/>
<dbReference type="GO" id="GO:0030430">
    <property type="term" value="C:host cell cytoplasm"/>
    <property type="evidence" value="ECO:0007669"/>
    <property type="project" value="UniProtKB-SubCell"/>
</dbReference>
<dbReference type="GO" id="GO:0016887">
    <property type="term" value="F:ATP hydrolysis activity"/>
    <property type="evidence" value="ECO:0007669"/>
    <property type="project" value="UniProtKB-UniRule"/>
</dbReference>
<dbReference type="GO" id="GO:0000287">
    <property type="term" value="F:magnesium ion binding"/>
    <property type="evidence" value="ECO:0007669"/>
    <property type="project" value="UniProtKB-UniRule"/>
</dbReference>
<dbReference type="GO" id="GO:0000166">
    <property type="term" value="F:nucleotide binding"/>
    <property type="evidence" value="ECO:0007669"/>
    <property type="project" value="UniProtKB-UniRule"/>
</dbReference>
<dbReference type="GO" id="GO:0003723">
    <property type="term" value="F:RNA binding"/>
    <property type="evidence" value="ECO:0007669"/>
    <property type="project" value="UniProtKB-UniRule"/>
</dbReference>
<dbReference type="GO" id="GO:0019079">
    <property type="term" value="P:viral genome replication"/>
    <property type="evidence" value="ECO:0007669"/>
    <property type="project" value="UniProtKB-UniRule"/>
</dbReference>
<dbReference type="HAMAP" id="MF_04092">
    <property type="entry name" value="ROTA_NSP5"/>
    <property type="match status" value="1"/>
</dbReference>
<dbReference type="InterPro" id="IPR002512">
    <property type="entry name" value="Rotavirus_A/C_NSP5"/>
</dbReference>
<dbReference type="Pfam" id="PF01525">
    <property type="entry name" value="Rota_NS26"/>
    <property type="match status" value="1"/>
</dbReference>
<dbReference type="PIRSF" id="PIRSF004006">
    <property type="entry name" value="Rota_NS26"/>
    <property type="match status" value="1"/>
</dbReference>
<sequence length="198" mass="21679">MSLSIDVTSLPSFSSSIYKNESSATASTLSGKSIGRSVQYVSPDAEAFSKYMLSKSPEDIGPSDSASNDPLTSFSIRSNAVKTNADAGVSMDSSVQSRPSINVGCDQVDFSFNKGIKVNANLDSSISVSTNSRKEKSKGDRKSRKHYPKIEAESDSDEYVLDDSDSDDGKCRNCKYKRKYFALRMRMKQVAMQLIEDL</sequence>
<accession>P23046</accession>
<protein>
    <recommendedName>
        <fullName evidence="1">Non-structural protein 5</fullName>
        <shortName evidence="1">NSP5</shortName>
    </recommendedName>
    <alternativeName>
        <fullName evidence="1">NS26</fullName>
    </alternativeName>
</protein>
<reference key="1">
    <citation type="journal article" date="1990" name="J. Virol.">
        <title>Sequence analysis of gene 11 equivalents from 'short' and 'super short' strains of rotavirus.</title>
        <authorList>
            <person name="Matsui S.M."/>
            <person name="Mackow E.R."/>
            <person name="Matsuno S."/>
            <person name="Paul P.S."/>
            <person name="Greenberg H.B."/>
        </authorList>
    </citation>
    <scope>NUCLEOTIDE SEQUENCE [GENOMIC RNA]</scope>
</reference>
<evidence type="ECO:0000255" key="1">
    <source>
        <dbReference type="HAMAP-Rule" id="MF_04092"/>
    </source>
</evidence>
<evidence type="ECO:0000256" key="2">
    <source>
        <dbReference type="SAM" id="MobiDB-lite"/>
    </source>
</evidence>
<organismHost>
    <name type="scientific">Bos taurus</name>
    <name type="common">Bovine</name>
    <dbReference type="NCBI Taxonomy" id="9913"/>
</organismHost>
<feature type="chain" id="PRO_0000149632" description="Non-structural protein 5">
    <location>
        <begin position="1"/>
        <end position="198"/>
    </location>
</feature>
<feature type="region of interest" description="Disordered" evidence="2">
    <location>
        <begin position="127"/>
        <end position="167"/>
    </location>
</feature>
<feature type="compositionally biased region" description="Acidic residues" evidence="2">
    <location>
        <begin position="153"/>
        <end position="166"/>
    </location>
</feature>
<feature type="binding site" evidence="1">
    <location>
        <position position="92"/>
    </location>
    <ligand>
        <name>Mg(2+)</name>
        <dbReference type="ChEBI" id="CHEBI:18420"/>
    </ligand>
</feature>
<feature type="modified residue" description="Phosphoserine; by host CK1" evidence="1">
    <location>
        <position position="67"/>
    </location>
</feature>
<feature type="modified residue" description="Phosphoserine; by host" evidence="1">
    <location>
        <position position="154"/>
    </location>
</feature>
<feature type="modified residue" description="Phosphoserine; by host" evidence="1">
    <location>
        <position position="156"/>
    </location>
</feature>
<feature type="modified residue" description="Phosphoserine; by host" evidence="1">
    <location>
        <position position="164"/>
    </location>
</feature>
<feature type="modified residue" description="Phosphoserine; by host" evidence="1">
    <location>
        <position position="166"/>
    </location>
</feature>
<organism>
    <name type="scientific">Rotavirus A (isolate RVA/Cow/United States/VMRI/1988/G6P[5])</name>
    <name type="common">RV-A</name>
    <dbReference type="NCBI Taxonomy" id="10935"/>
    <lineage>
        <taxon>Viruses</taxon>
        <taxon>Riboviria</taxon>
        <taxon>Orthornavirae</taxon>
        <taxon>Duplornaviricota</taxon>
        <taxon>Resentoviricetes</taxon>
        <taxon>Reovirales</taxon>
        <taxon>Sedoreoviridae</taxon>
        <taxon>Rotavirus</taxon>
        <taxon>Rotavirus A</taxon>
    </lineage>
</organism>
<keyword id="KW-0325">Glycoprotein</keyword>
<keyword id="KW-1035">Host cytoplasm</keyword>
<keyword id="KW-0460">Magnesium</keyword>
<keyword id="KW-0479">Metal-binding</keyword>
<keyword id="KW-0547">Nucleotide-binding</keyword>
<keyword id="KW-0597">Phosphoprotein</keyword>
<keyword id="KW-0694">RNA-binding</keyword>
<name>NSP5_ROTBV</name>
<comment type="function">
    <text evidence="1">Plays an essential role in the viral genome replication. Participates, together with NSP2, in the formation of viral factories (viroplasms), which are large inclusions in the host cytoplasm where replication intermediates are assembled and viral RNA replication takes place. Orchestrates the recruitment of viroplasmic proteins such as capsid proteins to these factories. Participates in the selective exclusion of host proteins from stress granules (SG) and P bodies (PB). Also participates in the sequestration of these remodeled organelles in viral factories.</text>
</comment>
<comment type="cofactor">
    <cofactor evidence="1">
        <name>Mg(2+)</name>
        <dbReference type="ChEBI" id="CHEBI:18420"/>
    </cofactor>
</comment>
<comment type="subunit">
    <text evidence="1">Homodimer. Interacts with VP1. Interacts with VP2. Interacts with NSP2; this interaction leads to up-regulation of NSP5 hyperphosphorylation and formation of virus factories. Interacts with NSP6. Participates in the selective exclusion of host proteins from stress granules (SG) and P bodies (PB). Also participates in the sequestration of these remodeled organelles in viral factories.</text>
</comment>
<comment type="subcellular location">
    <subcellularLocation>
        <location evidence="1">Host cytoplasm</location>
    </subcellularLocation>
    <text evidence="1">Found in spherical cytoplasmic structures, called virus factories, that appear early after infection and are the site of viral replication and packaging.</text>
</comment>
<comment type="PTM">
    <text evidence="1">O-glycosylated.</text>
</comment>
<comment type="PTM">
    <text evidence="1">Hyperphosphorylated on serine residues, when in dimeric form. Phosphorylation by host CK1 is required for the hyperphosphorylation of NSP5 dimer.</text>
</comment>
<comment type="similarity">
    <text evidence="1">Belongs to the rotavirus NSP5 family.</text>
</comment>
<proteinExistence type="inferred from homology"/>